<sequence>MERTFVMVKPDGVQRGLVGEVIGRLERKGLKIVAMKMLWIAREMAENHYAEHREKPFFSALVDYITSGPVVAMVVEGKNAIKVVRTLVGATNPAEAAPGTIRGDFGLDVGRNVVHASDSPQSAEREISLFFSDDEIVNWEKADEDWIYEER</sequence>
<keyword id="KW-0067">ATP-binding</keyword>
<keyword id="KW-0963">Cytoplasm</keyword>
<keyword id="KW-0418">Kinase</keyword>
<keyword id="KW-0460">Magnesium</keyword>
<keyword id="KW-0479">Metal-binding</keyword>
<keyword id="KW-0546">Nucleotide metabolism</keyword>
<keyword id="KW-0547">Nucleotide-binding</keyword>
<keyword id="KW-0597">Phosphoprotein</keyword>
<keyword id="KW-1185">Reference proteome</keyword>
<keyword id="KW-0808">Transferase</keyword>
<name>NDK_ARCFU</name>
<organism>
    <name type="scientific">Archaeoglobus fulgidus (strain ATCC 49558 / DSM 4304 / JCM 9628 / NBRC 100126 / VC-16)</name>
    <dbReference type="NCBI Taxonomy" id="224325"/>
    <lineage>
        <taxon>Archaea</taxon>
        <taxon>Methanobacteriati</taxon>
        <taxon>Methanobacteriota</taxon>
        <taxon>Archaeoglobi</taxon>
        <taxon>Archaeoglobales</taxon>
        <taxon>Archaeoglobaceae</taxon>
        <taxon>Archaeoglobus</taxon>
    </lineage>
</organism>
<comment type="function">
    <text evidence="1">Major role in the synthesis of nucleoside triphosphates other than ATP. The ATP gamma phosphate is transferred to the NDP beta phosphate via a ping-pong mechanism, using a phosphorylated active-site intermediate.</text>
</comment>
<comment type="catalytic activity">
    <reaction evidence="1">
        <text>a 2'-deoxyribonucleoside 5'-diphosphate + ATP = a 2'-deoxyribonucleoside 5'-triphosphate + ADP</text>
        <dbReference type="Rhea" id="RHEA:44640"/>
        <dbReference type="ChEBI" id="CHEBI:30616"/>
        <dbReference type="ChEBI" id="CHEBI:61560"/>
        <dbReference type="ChEBI" id="CHEBI:73316"/>
        <dbReference type="ChEBI" id="CHEBI:456216"/>
        <dbReference type="EC" id="2.7.4.6"/>
    </reaction>
</comment>
<comment type="catalytic activity">
    <reaction evidence="1">
        <text>a ribonucleoside 5'-diphosphate + ATP = a ribonucleoside 5'-triphosphate + ADP</text>
        <dbReference type="Rhea" id="RHEA:18113"/>
        <dbReference type="ChEBI" id="CHEBI:30616"/>
        <dbReference type="ChEBI" id="CHEBI:57930"/>
        <dbReference type="ChEBI" id="CHEBI:61557"/>
        <dbReference type="ChEBI" id="CHEBI:456216"/>
        <dbReference type="EC" id="2.7.4.6"/>
    </reaction>
</comment>
<comment type="cofactor">
    <cofactor evidence="1">
        <name>Mg(2+)</name>
        <dbReference type="ChEBI" id="CHEBI:18420"/>
    </cofactor>
</comment>
<comment type="subcellular location">
    <subcellularLocation>
        <location evidence="1">Cytoplasm</location>
    </subcellularLocation>
</comment>
<comment type="similarity">
    <text evidence="1 2">Belongs to the NDK family.</text>
</comment>
<dbReference type="EC" id="2.7.4.6" evidence="1"/>
<dbReference type="EMBL" id="AE000782">
    <property type="protein sequence ID" value="AAB90470.1"/>
    <property type="molecule type" value="Genomic_DNA"/>
</dbReference>
<dbReference type="PIR" id="G69345">
    <property type="entry name" value="G69345"/>
</dbReference>
<dbReference type="RefSeq" id="WP_010878270.1">
    <property type="nucleotide sequence ID" value="NC_000917.1"/>
</dbReference>
<dbReference type="SMR" id="O29491"/>
<dbReference type="STRING" id="224325.AF_0767"/>
<dbReference type="PaxDb" id="224325-AF_0767"/>
<dbReference type="EnsemblBacteria" id="AAB90470">
    <property type="protein sequence ID" value="AAB90470"/>
    <property type="gene ID" value="AF_0767"/>
</dbReference>
<dbReference type="GeneID" id="24794365"/>
<dbReference type="KEGG" id="afu:AF_0767"/>
<dbReference type="eggNOG" id="arCOG04313">
    <property type="taxonomic scope" value="Archaea"/>
</dbReference>
<dbReference type="HOGENOM" id="CLU_060216_6_3_2"/>
<dbReference type="OrthoDB" id="6874at2157"/>
<dbReference type="PhylomeDB" id="O29491"/>
<dbReference type="Proteomes" id="UP000002199">
    <property type="component" value="Chromosome"/>
</dbReference>
<dbReference type="GO" id="GO:0005737">
    <property type="term" value="C:cytoplasm"/>
    <property type="evidence" value="ECO:0007669"/>
    <property type="project" value="UniProtKB-SubCell"/>
</dbReference>
<dbReference type="GO" id="GO:0005524">
    <property type="term" value="F:ATP binding"/>
    <property type="evidence" value="ECO:0007669"/>
    <property type="project" value="UniProtKB-UniRule"/>
</dbReference>
<dbReference type="GO" id="GO:0046872">
    <property type="term" value="F:metal ion binding"/>
    <property type="evidence" value="ECO:0007669"/>
    <property type="project" value="UniProtKB-KW"/>
</dbReference>
<dbReference type="GO" id="GO:0004550">
    <property type="term" value="F:nucleoside diphosphate kinase activity"/>
    <property type="evidence" value="ECO:0007669"/>
    <property type="project" value="UniProtKB-UniRule"/>
</dbReference>
<dbReference type="GO" id="GO:0006241">
    <property type="term" value="P:CTP biosynthetic process"/>
    <property type="evidence" value="ECO:0007669"/>
    <property type="project" value="UniProtKB-UniRule"/>
</dbReference>
<dbReference type="GO" id="GO:0006183">
    <property type="term" value="P:GTP biosynthetic process"/>
    <property type="evidence" value="ECO:0007669"/>
    <property type="project" value="UniProtKB-UniRule"/>
</dbReference>
<dbReference type="GO" id="GO:0006228">
    <property type="term" value="P:UTP biosynthetic process"/>
    <property type="evidence" value="ECO:0007669"/>
    <property type="project" value="UniProtKB-UniRule"/>
</dbReference>
<dbReference type="CDD" id="cd04413">
    <property type="entry name" value="NDPk_I"/>
    <property type="match status" value="1"/>
</dbReference>
<dbReference type="FunFam" id="3.30.70.141:FF:000002">
    <property type="entry name" value="Nucleoside diphosphate kinase"/>
    <property type="match status" value="1"/>
</dbReference>
<dbReference type="Gene3D" id="3.30.70.141">
    <property type="entry name" value="Nucleoside diphosphate kinase-like domain"/>
    <property type="match status" value="1"/>
</dbReference>
<dbReference type="HAMAP" id="MF_00451">
    <property type="entry name" value="NDP_kinase"/>
    <property type="match status" value="1"/>
</dbReference>
<dbReference type="InterPro" id="IPR034907">
    <property type="entry name" value="NDK-like_dom"/>
</dbReference>
<dbReference type="InterPro" id="IPR036850">
    <property type="entry name" value="NDK-like_dom_sf"/>
</dbReference>
<dbReference type="InterPro" id="IPR001564">
    <property type="entry name" value="Nucleoside_diP_kinase"/>
</dbReference>
<dbReference type="InterPro" id="IPR023005">
    <property type="entry name" value="Nucleoside_diP_kinase_AS"/>
</dbReference>
<dbReference type="NCBIfam" id="NF001908">
    <property type="entry name" value="PRK00668.1"/>
    <property type="match status" value="1"/>
</dbReference>
<dbReference type="PANTHER" id="PTHR11349">
    <property type="entry name" value="NUCLEOSIDE DIPHOSPHATE KINASE"/>
    <property type="match status" value="1"/>
</dbReference>
<dbReference type="Pfam" id="PF00334">
    <property type="entry name" value="NDK"/>
    <property type="match status" value="1"/>
</dbReference>
<dbReference type="PRINTS" id="PR01243">
    <property type="entry name" value="NUCDPKINASE"/>
</dbReference>
<dbReference type="SMART" id="SM00562">
    <property type="entry name" value="NDK"/>
    <property type="match status" value="1"/>
</dbReference>
<dbReference type="SUPFAM" id="SSF54919">
    <property type="entry name" value="Nucleoside diphosphate kinase, NDK"/>
    <property type="match status" value="1"/>
</dbReference>
<dbReference type="PROSITE" id="PS00469">
    <property type="entry name" value="NDPK"/>
    <property type="match status" value="1"/>
</dbReference>
<dbReference type="PROSITE" id="PS51374">
    <property type="entry name" value="NDPK_LIKE"/>
    <property type="match status" value="1"/>
</dbReference>
<proteinExistence type="inferred from homology"/>
<evidence type="ECO:0000255" key="1">
    <source>
        <dbReference type="HAMAP-Rule" id="MF_00451"/>
    </source>
</evidence>
<evidence type="ECO:0000305" key="2"/>
<accession>O29491</accession>
<protein>
    <recommendedName>
        <fullName evidence="1">Nucleoside diphosphate kinase</fullName>
        <shortName evidence="1">NDK</shortName>
        <shortName evidence="1">NDP kinase</shortName>
        <ecNumber evidence="1">2.7.4.6</ecNumber>
    </recommendedName>
    <alternativeName>
        <fullName evidence="1">Nucleoside-2-P kinase</fullName>
    </alternativeName>
</protein>
<feature type="chain" id="PRO_0000137087" description="Nucleoside diphosphate kinase">
    <location>
        <begin position="1"/>
        <end position="151"/>
    </location>
</feature>
<feature type="active site" description="Pros-phosphohistidine intermediate" evidence="1">
    <location>
        <position position="115"/>
    </location>
</feature>
<feature type="binding site" evidence="1">
    <location>
        <position position="9"/>
    </location>
    <ligand>
        <name>ATP</name>
        <dbReference type="ChEBI" id="CHEBI:30616"/>
    </ligand>
</feature>
<feature type="binding site" evidence="1">
    <location>
        <position position="57"/>
    </location>
    <ligand>
        <name>ATP</name>
        <dbReference type="ChEBI" id="CHEBI:30616"/>
    </ligand>
</feature>
<feature type="binding site" evidence="1">
    <location>
        <position position="85"/>
    </location>
    <ligand>
        <name>ATP</name>
        <dbReference type="ChEBI" id="CHEBI:30616"/>
    </ligand>
</feature>
<feature type="binding site" evidence="1">
    <location>
        <position position="91"/>
    </location>
    <ligand>
        <name>ATP</name>
        <dbReference type="ChEBI" id="CHEBI:30616"/>
    </ligand>
</feature>
<feature type="binding site" evidence="1">
    <location>
        <position position="102"/>
    </location>
    <ligand>
        <name>ATP</name>
        <dbReference type="ChEBI" id="CHEBI:30616"/>
    </ligand>
</feature>
<feature type="binding site" evidence="1">
    <location>
        <position position="112"/>
    </location>
    <ligand>
        <name>ATP</name>
        <dbReference type="ChEBI" id="CHEBI:30616"/>
    </ligand>
</feature>
<reference key="1">
    <citation type="journal article" date="1997" name="Nature">
        <title>The complete genome sequence of the hyperthermophilic, sulphate-reducing archaeon Archaeoglobus fulgidus.</title>
        <authorList>
            <person name="Klenk H.-P."/>
            <person name="Clayton R.A."/>
            <person name="Tomb J.-F."/>
            <person name="White O."/>
            <person name="Nelson K.E."/>
            <person name="Ketchum K.A."/>
            <person name="Dodson R.J."/>
            <person name="Gwinn M.L."/>
            <person name="Hickey E.K."/>
            <person name="Peterson J.D."/>
            <person name="Richardson D.L."/>
            <person name="Kerlavage A.R."/>
            <person name="Graham D.E."/>
            <person name="Kyrpides N.C."/>
            <person name="Fleischmann R.D."/>
            <person name="Quackenbush J."/>
            <person name="Lee N.H."/>
            <person name="Sutton G.G."/>
            <person name="Gill S.R."/>
            <person name="Kirkness E.F."/>
            <person name="Dougherty B.A."/>
            <person name="McKenney K."/>
            <person name="Adams M.D."/>
            <person name="Loftus B.J."/>
            <person name="Peterson S.N."/>
            <person name="Reich C.I."/>
            <person name="McNeil L.K."/>
            <person name="Badger J.H."/>
            <person name="Glodek A."/>
            <person name="Zhou L."/>
            <person name="Overbeek R."/>
            <person name="Gocayne J.D."/>
            <person name="Weidman J.F."/>
            <person name="McDonald L.A."/>
            <person name="Utterback T.R."/>
            <person name="Cotton M.D."/>
            <person name="Spriggs T."/>
            <person name="Artiach P."/>
            <person name="Kaine B.P."/>
            <person name="Sykes S.M."/>
            <person name="Sadow P.W."/>
            <person name="D'Andrea K.P."/>
            <person name="Bowman C."/>
            <person name="Fujii C."/>
            <person name="Garland S.A."/>
            <person name="Mason T.M."/>
            <person name="Olsen G.J."/>
            <person name="Fraser C.M."/>
            <person name="Smith H.O."/>
            <person name="Woese C.R."/>
            <person name="Venter J.C."/>
        </authorList>
    </citation>
    <scope>NUCLEOTIDE SEQUENCE [LARGE SCALE GENOMIC DNA]</scope>
    <source>
        <strain>ATCC 49558 / DSM 4304 / JCM 9628 / NBRC 100126 / VC-16</strain>
    </source>
</reference>
<gene>
    <name evidence="1" type="primary">ndk</name>
    <name type="ordered locus">AF_0767</name>
</gene>